<organism>
    <name type="scientific">Saccharomyces cerevisiae (strain ATCC 204508 / S288c)</name>
    <name type="common">Baker's yeast</name>
    <dbReference type="NCBI Taxonomy" id="559292"/>
    <lineage>
        <taxon>Eukaryota</taxon>
        <taxon>Fungi</taxon>
        <taxon>Dikarya</taxon>
        <taxon>Ascomycota</taxon>
        <taxon>Saccharomycotina</taxon>
        <taxon>Saccharomycetes</taxon>
        <taxon>Saccharomycetales</taxon>
        <taxon>Saccharomycetaceae</taxon>
        <taxon>Saccharomyces</taxon>
    </lineage>
</organism>
<name>CTK3_YEAST</name>
<sequence>MDSLEARLQFIQVLKNLQKTLHKTRDSITSSSTTTPPSSQQKLNNDPIQFYLRNYRHHYEDFHQCLFDTTMKMDPLDRLDVVIYYVRIIRNLYPHSHSNTNVTKVLNEVLLMDIDLVFELCLPCQDWKSLTNQATCKELFLDLSKLIHYDATSVTHTPSDTTLIDATTWYSVKTERTTKDYKESLQRTESLLKDRDLKKLAFFQQFNSDTTAINPDLQTQPTNANILLHRMEADRELHKRSKETSWYIERPSNDILDESEFKSLWTHFETTDSGFDKDDYKNIKALNDIAKASYIY</sequence>
<gene>
    <name type="primary">CTK3</name>
    <name type="ordered locus">YML112W</name>
    <name type="ORF">YM8339.07</name>
</gene>
<comment type="function">
    <text evidence="3 4 6 7 8 9 11">Gamma subunit of the CTDK-I complex, which hyperphosphorylates the C-terminal heptapeptide repeat domain (CTD) of the largest RNA polymerase II subunit. CTDK-I phosphorylates 'Ser-5' if the CTD substrate is not phosphorylated at 'Ser-5', but will phosphorylate 'Ser-2' of a CTD substrate if 'Ser-5' is already phosphorylated. CTDK-I is also more reactive toward substrates that are prephosphorylated at 'Ser-2' or 'Ser-5' compared with an unphosphorylated CTD substrate, therefore efficiently creating doubly phosphorylated CTD repeats. Involved in RNA polymerase I transcription and RNA polymerase II transcriptional elongation, and as part of the CTDK-I complex, pre-mRNA 3'-end processing and SET2 mediated H3K36 methylation. Together with CTK2, required for CTK1 CTD kinase activation. Required for DNA damage induced transcription. Involved in the adaptation to alternative carbon sources, including galactose, glycerol and ethanol, but not raffinose. Required for the integrity of the rDNA locus.</text>
</comment>
<comment type="subunit">
    <text evidence="2 10">CTDK-I consists of three subunits, CTK1, CTK2 and CTK3 (also called alpha, beta and gamma). Interacts with CTK1. Heterodimerization with CTK2 is required to protect this subunit from degradation.</text>
</comment>
<comment type="interaction">
    <interactant intactId="EBI-5241">
        <id>P46963</id>
    </interactant>
    <interactant intactId="EBI-5230">
        <id>Q03957</id>
        <label>CTK1</label>
    </interactant>
    <organismsDiffer>false</organismsDiffer>
    <experiments>8</experiments>
</comment>
<comment type="interaction">
    <interactant intactId="EBI-5241">
        <id>P46963</id>
    </interactant>
    <interactant intactId="EBI-5236">
        <id>P46962</id>
        <label>CTK2</label>
    </interactant>
    <organismsDiffer>false</organismsDiffer>
    <experiments>11</experiments>
</comment>
<comment type="subcellular location">
    <subcellularLocation>
        <location>Nucleus</location>
        <location>Nucleolus</location>
    </subcellularLocation>
    <subcellularLocation>
        <location>Cytoplasm</location>
    </subcellularLocation>
</comment>
<comment type="PTM">
    <text evidence="2">Ubiquitinated. Ubiquitination leads to degradation by the 26S proteasome pathway.</text>
</comment>
<comment type="disruption phenotype">
    <text evidence="4 10">Null mutants are viable, but grow more slowly than wild-type cells at 30 degrees Celsius. They are cold-sensitive, failing to grow at 12 degrees Celsius. They display flocculent growth in liquid media and they show abnormal cell morphologies, for example, a significant fraction of the cells are greatly enlarged. Deletion mutant is sensitive to the DNA synthesis inhibitor hydroxyurea (HU) and UV irradiation.</text>
</comment>
<comment type="miscellaneous">
    <text evidence="5">Present with 2640 molecules/cell in log phase SD medium.</text>
</comment>
<comment type="similarity">
    <text evidence="12">Belongs to the CTK3 family.</text>
</comment>
<protein>
    <recommendedName>
        <fullName>CTD kinase subunit gamma</fullName>
        <shortName>CTDK-I gamma subunit</shortName>
    </recommendedName>
    <alternativeName>
        <fullName>CTD kinase 32 kDa subunit</fullName>
    </alternativeName>
    <alternativeName>
        <fullName>CTD kinase subunit 3</fullName>
    </alternativeName>
</protein>
<accession>P46963</accession>
<accession>D6W0H2</accession>
<accession>Q6LBS6</accession>
<proteinExistence type="evidence at protein level"/>
<evidence type="ECO:0000256" key="1">
    <source>
        <dbReference type="SAM" id="MobiDB-lite"/>
    </source>
</evidence>
<evidence type="ECO:0000269" key="2">
    <source>
    </source>
</evidence>
<evidence type="ECO:0000269" key="3">
    <source>
    </source>
</evidence>
<evidence type="ECO:0000269" key="4">
    <source>
    </source>
</evidence>
<evidence type="ECO:0000269" key="5">
    <source>
    </source>
</evidence>
<evidence type="ECO:0000269" key="6">
    <source>
    </source>
</evidence>
<evidence type="ECO:0000269" key="7">
    <source>
    </source>
</evidence>
<evidence type="ECO:0000269" key="8">
    <source>
    </source>
</evidence>
<evidence type="ECO:0000269" key="9">
    <source>
    </source>
</evidence>
<evidence type="ECO:0000269" key="10">
    <source>
    </source>
</evidence>
<evidence type="ECO:0000269" key="11">
    <source>
    </source>
</evidence>
<evidence type="ECO:0000305" key="12"/>
<evidence type="ECO:0007744" key="13">
    <source>
    </source>
</evidence>
<evidence type="ECO:0007829" key="14">
    <source>
        <dbReference type="PDB" id="7JV7"/>
    </source>
</evidence>
<dbReference type="EMBL" id="U30296">
    <property type="protein sequence ID" value="AAC49078.1"/>
    <property type="molecule type" value="Genomic_DNA"/>
</dbReference>
<dbReference type="EMBL" id="Z49210">
    <property type="protein sequence ID" value="CAA89106.1"/>
    <property type="molecule type" value="Genomic_DNA"/>
</dbReference>
<dbReference type="EMBL" id="AY557764">
    <property type="protein sequence ID" value="AAS56090.1"/>
    <property type="molecule type" value="Genomic_DNA"/>
</dbReference>
<dbReference type="EMBL" id="X15478">
    <property type="protein sequence ID" value="CAE82078.1"/>
    <property type="molecule type" value="Genomic_DNA"/>
</dbReference>
<dbReference type="EMBL" id="BK006946">
    <property type="protein sequence ID" value="DAA09786.1"/>
    <property type="molecule type" value="Genomic_DNA"/>
</dbReference>
<dbReference type="PIR" id="S53960">
    <property type="entry name" value="S53960"/>
</dbReference>
<dbReference type="RefSeq" id="NP_013595.1">
    <property type="nucleotide sequence ID" value="NM_001182474.1"/>
</dbReference>
<dbReference type="PDB" id="7JV7">
    <property type="method" value="X-ray"/>
    <property type="resolution" value="1.85 A"/>
    <property type="chains" value="C=1-296"/>
</dbReference>
<dbReference type="PDBsum" id="7JV7"/>
<dbReference type="SMR" id="P46963"/>
<dbReference type="BioGRID" id="35092">
    <property type="interactions" value="355"/>
</dbReference>
<dbReference type="ComplexPortal" id="CPX-1710">
    <property type="entry name" value="Carboxy-terminal domain protein kinase complex"/>
</dbReference>
<dbReference type="DIP" id="DIP-2106N"/>
<dbReference type="FunCoup" id="P46963">
    <property type="interactions" value="65"/>
</dbReference>
<dbReference type="IntAct" id="P46963">
    <property type="interactions" value="12"/>
</dbReference>
<dbReference type="MINT" id="P46963"/>
<dbReference type="STRING" id="4932.YML112W"/>
<dbReference type="iPTMnet" id="P46963"/>
<dbReference type="PaxDb" id="4932-YML112W"/>
<dbReference type="PeptideAtlas" id="P46963"/>
<dbReference type="EnsemblFungi" id="YML112W_mRNA">
    <property type="protein sequence ID" value="YML112W"/>
    <property type="gene ID" value="YML112W"/>
</dbReference>
<dbReference type="GeneID" id="854928"/>
<dbReference type="KEGG" id="sce:YML112W"/>
<dbReference type="AGR" id="SGD:S000004580"/>
<dbReference type="SGD" id="S000004580">
    <property type="gene designation" value="CTK3"/>
</dbReference>
<dbReference type="VEuPathDB" id="FungiDB:YML112W"/>
<dbReference type="eggNOG" id="ENOG502RZM5">
    <property type="taxonomic scope" value="Eukaryota"/>
</dbReference>
<dbReference type="HOGENOM" id="CLU_056411_0_0_1"/>
<dbReference type="InParanoid" id="P46963"/>
<dbReference type="OMA" id="HYEDFHQ"/>
<dbReference type="OrthoDB" id="21266at2759"/>
<dbReference type="BioCyc" id="YEAST:G3O-32694-MONOMER"/>
<dbReference type="BioGRID-ORCS" id="854928">
    <property type="hits" value="0 hits in 10 CRISPR screens"/>
</dbReference>
<dbReference type="PRO" id="PR:P46963"/>
<dbReference type="Proteomes" id="UP000002311">
    <property type="component" value="Chromosome XIII"/>
</dbReference>
<dbReference type="RNAct" id="P46963">
    <property type="molecule type" value="protein"/>
</dbReference>
<dbReference type="GO" id="GO:0032806">
    <property type="term" value="C:carboxy-terminal domain protein kinase complex"/>
    <property type="evidence" value="ECO:0000353"/>
    <property type="project" value="ComplexPortal"/>
</dbReference>
<dbReference type="GO" id="GO:0070692">
    <property type="term" value="C:CTDK-1 complex"/>
    <property type="evidence" value="ECO:0000314"/>
    <property type="project" value="SGD"/>
</dbReference>
<dbReference type="GO" id="GO:0005737">
    <property type="term" value="C:cytoplasm"/>
    <property type="evidence" value="ECO:0007669"/>
    <property type="project" value="UniProtKB-SubCell"/>
</dbReference>
<dbReference type="GO" id="GO:0005730">
    <property type="term" value="C:nucleolus"/>
    <property type="evidence" value="ECO:0000314"/>
    <property type="project" value="SGD"/>
</dbReference>
<dbReference type="GO" id="GO:0005654">
    <property type="term" value="C:nucleoplasm"/>
    <property type="evidence" value="ECO:0000314"/>
    <property type="project" value="SGD"/>
</dbReference>
<dbReference type="GO" id="GO:0016538">
    <property type="term" value="F:cyclin-dependent protein serine/threonine kinase regulator activity"/>
    <property type="evidence" value="ECO:0000314"/>
    <property type="project" value="SGD"/>
</dbReference>
<dbReference type="GO" id="GO:0006974">
    <property type="term" value="P:DNA damage response"/>
    <property type="evidence" value="ECO:0007669"/>
    <property type="project" value="UniProtKB-KW"/>
</dbReference>
<dbReference type="GO" id="GO:0031124">
    <property type="term" value="P:mRNA 3'-end processing"/>
    <property type="evidence" value="ECO:0000314"/>
    <property type="project" value="ComplexPortal"/>
</dbReference>
<dbReference type="GO" id="GO:0032786">
    <property type="term" value="P:positive regulation of DNA-templated transcription, elongation"/>
    <property type="evidence" value="ECO:0000314"/>
    <property type="project" value="SGD"/>
</dbReference>
<dbReference type="GO" id="GO:0045943">
    <property type="term" value="P:positive regulation of transcription by RNA polymerase I"/>
    <property type="evidence" value="ECO:0000314"/>
    <property type="project" value="ComplexPortal"/>
</dbReference>
<dbReference type="GO" id="GO:0045944">
    <property type="term" value="P:positive regulation of transcription by RNA polymerase II"/>
    <property type="evidence" value="ECO:0000303"/>
    <property type="project" value="ComplexPortal"/>
</dbReference>
<dbReference type="GO" id="GO:0045903">
    <property type="term" value="P:positive regulation of translational fidelity"/>
    <property type="evidence" value="ECO:0000353"/>
    <property type="project" value="SGD"/>
</dbReference>
<dbReference type="InterPro" id="IPR042326">
    <property type="entry name" value="Ctk3"/>
</dbReference>
<dbReference type="InterPro" id="IPR024637">
    <property type="entry name" value="Ctk3_C"/>
</dbReference>
<dbReference type="PANTHER" id="PTHR28291">
    <property type="entry name" value="CTD KINASE SUBUNIT GAMMA"/>
    <property type="match status" value="1"/>
</dbReference>
<dbReference type="PANTHER" id="PTHR28291:SF1">
    <property type="entry name" value="CTD KINASE SUBUNIT GAMMA"/>
    <property type="match status" value="1"/>
</dbReference>
<dbReference type="Pfam" id="PF12350">
    <property type="entry name" value="CTK3_C"/>
    <property type="match status" value="1"/>
</dbReference>
<reference key="1">
    <citation type="journal article" date="1995" name="Mol. Cell. Biol.">
        <title>The yeast carboxyl-terminal repeat domain kinase CTDK-I is a divergent cyclin-cyclin-dependent kinase complex.</title>
        <authorList>
            <person name="Sterner D.E."/>
            <person name="Lee J.M."/>
            <person name="Hardin S.E."/>
            <person name="Greenleaf A.L."/>
        </authorList>
    </citation>
    <scope>NUCLEOTIDE SEQUENCE [GENOMIC DNA]</scope>
    <scope>PROTEIN SEQUENCE OF 146-173</scope>
    <scope>CTD KINASE ACTIVITY</scope>
    <scope>SUBUNIT</scope>
    <scope>DISRUPTION PHENOTYPE</scope>
</reference>
<reference key="2">
    <citation type="journal article" date="1997" name="Nature">
        <title>The nucleotide sequence of Saccharomyces cerevisiae chromosome XIII.</title>
        <authorList>
            <person name="Bowman S."/>
            <person name="Churcher C.M."/>
            <person name="Badcock K."/>
            <person name="Brown D."/>
            <person name="Chillingworth T."/>
            <person name="Connor R."/>
            <person name="Dedman K."/>
            <person name="Devlin K."/>
            <person name="Gentles S."/>
            <person name="Hamlin N."/>
            <person name="Hunt S."/>
            <person name="Jagels K."/>
            <person name="Lye G."/>
            <person name="Moule S."/>
            <person name="Odell C."/>
            <person name="Pearson D."/>
            <person name="Rajandream M.A."/>
            <person name="Rice P."/>
            <person name="Skelton J."/>
            <person name="Walsh S.V."/>
            <person name="Whitehead S."/>
            <person name="Barrell B.G."/>
        </authorList>
    </citation>
    <scope>NUCLEOTIDE SEQUENCE [LARGE SCALE GENOMIC DNA]</scope>
    <source>
        <strain>ATCC 204508 / S288c</strain>
    </source>
</reference>
<reference key="3">
    <citation type="journal article" date="2014" name="G3 (Bethesda)">
        <title>The reference genome sequence of Saccharomyces cerevisiae: Then and now.</title>
        <authorList>
            <person name="Engel S.R."/>
            <person name="Dietrich F.S."/>
            <person name="Fisk D.G."/>
            <person name="Binkley G."/>
            <person name="Balakrishnan R."/>
            <person name="Costanzo M.C."/>
            <person name="Dwight S.S."/>
            <person name="Hitz B.C."/>
            <person name="Karra K."/>
            <person name="Nash R.S."/>
            <person name="Weng S."/>
            <person name="Wong E.D."/>
            <person name="Lloyd P."/>
            <person name="Skrzypek M.S."/>
            <person name="Miyasato S.R."/>
            <person name="Simison M."/>
            <person name="Cherry J.M."/>
        </authorList>
    </citation>
    <scope>GENOME REANNOTATION</scope>
    <source>
        <strain>ATCC 204508 / S288c</strain>
    </source>
</reference>
<reference key="4">
    <citation type="journal article" date="2007" name="Genome Res.">
        <title>Approaching a complete repository of sequence-verified protein-encoding clones for Saccharomyces cerevisiae.</title>
        <authorList>
            <person name="Hu Y."/>
            <person name="Rolfs A."/>
            <person name="Bhullar B."/>
            <person name="Murthy T.V.S."/>
            <person name="Zhu C."/>
            <person name="Berger M.F."/>
            <person name="Camargo A.A."/>
            <person name="Kelley F."/>
            <person name="McCarron S."/>
            <person name="Jepson D."/>
            <person name="Richardson A."/>
            <person name="Raphael J."/>
            <person name="Moreira D."/>
            <person name="Taycher E."/>
            <person name="Zuo D."/>
            <person name="Mohr S."/>
            <person name="Kane M.F."/>
            <person name="Williamson J."/>
            <person name="Simpson A.J.G."/>
            <person name="Bulyk M.L."/>
            <person name="Harlow E."/>
            <person name="Marsischky G."/>
            <person name="Kolodner R.D."/>
            <person name="LaBaer J."/>
        </authorList>
    </citation>
    <scope>NUCLEOTIDE SEQUENCE [GENOMIC DNA]</scope>
    <source>
        <strain>ATCC 204508 / S288c</strain>
    </source>
</reference>
<reference key="5">
    <citation type="journal article" date="1989" name="EMBO J.">
        <title>A DNA binding protein that recognizes oligo(dA).oligo(dT) tracts.</title>
        <authorList>
            <person name="Winter E."/>
            <person name="Varshavsky A."/>
        </authorList>
    </citation>
    <scope>NUCLEOTIDE SEQUENCE [GENOMIC DNA] OF 46-262</scope>
</reference>
<reference key="6">
    <citation type="journal article" date="1997" name="J. Biol. Chem.">
        <title>Modulation of RNA polymerase II elongation efficiency by C-terminal heptapeptide repeat domain kinase I.</title>
        <authorList>
            <person name="Lee J.M."/>
            <person name="Greenleaf A.L."/>
        </authorList>
    </citation>
    <scope>FUNCTION IN RNA POLYMERASE II TRANSCRIPTION</scope>
</reference>
<reference key="7">
    <citation type="journal article" date="2001" name="J. Biol. Chem.">
        <title>Activation of the cyclin-dependent kinase CTDK-I requires the heterodimerization of two unstable subunits.</title>
        <authorList>
            <person name="Hautbergue G."/>
            <person name="Goguel V."/>
        </authorList>
    </citation>
    <scope>CTK1 ACTIVATION</scope>
    <scope>INTERACTION WITH CTK1 AND CTK2</scope>
    <scope>UBIQUITINATION</scope>
    <scope>MUTAGENESIS OF 247-TYR--TYR-296</scope>
</reference>
<reference key="8">
    <citation type="journal article" date="2003" name="Eukaryot. Cell">
        <title>Budding yeast CTDK-I is required for DNA damage-induced transcription.</title>
        <authorList>
            <person name="Ostapenko D."/>
            <person name="Solomon M.J."/>
        </authorList>
    </citation>
    <scope>FUNCTION</scope>
    <scope>DISRUPTION PHENOTYPE</scope>
</reference>
<reference key="9">
    <citation type="journal article" date="2003" name="Genes Dev.">
        <title>Phosphorylation of RNA polymerase II CTD regulates H3 methylation in yeast.</title>
        <authorList>
            <person name="Xiao T."/>
            <person name="Hall H."/>
            <person name="Kizer K.O."/>
            <person name="Shibata Y."/>
            <person name="Hall M.C."/>
            <person name="Borchers C.H."/>
            <person name="Strahl B.D."/>
        </authorList>
    </citation>
    <scope>FUNCTION IN H3 METHYLATION</scope>
</reference>
<reference key="10">
    <citation type="journal article" date="2003" name="Nature">
        <title>Global analysis of protein localization in budding yeast.</title>
        <authorList>
            <person name="Huh W.-K."/>
            <person name="Falvo J.V."/>
            <person name="Gerke L.C."/>
            <person name="Carroll A.S."/>
            <person name="Howson R.W."/>
            <person name="Weissman J.S."/>
            <person name="O'Shea E.K."/>
        </authorList>
    </citation>
    <scope>SUBCELLULAR LOCATION [LARGE SCALE ANALYSIS]</scope>
</reference>
<reference key="11">
    <citation type="journal article" date="2003" name="Nature">
        <title>Global analysis of protein expression in yeast.</title>
        <authorList>
            <person name="Ghaemmaghami S."/>
            <person name="Huh W.-K."/>
            <person name="Bower K."/>
            <person name="Howson R.W."/>
            <person name="Belle A."/>
            <person name="Dephoure N."/>
            <person name="O'Shea E.K."/>
            <person name="Weissman J.S."/>
        </authorList>
    </citation>
    <scope>LEVEL OF PROTEIN EXPRESSION [LARGE SCALE ANALYSIS]</scope>
</reference>
<reference key="12">
    <citation type="journal article" date="2004" name="J. Biol. Chem.">
        <title>C-terminal repeat domain kinase I phosphorylates Ser2 and Ser5 of RNA polymerase II C-terminal domain repeats.</title>
        <authorList>
            <person name="Jones J.C."/>
            <person name="Phatnani H.P."/>
            <person name="Haystead T.A."/>
            <person name="MacDonald J.A."/>
            <person name="Alam S.M."/>
            <person name="Greenleaf A.L."/>
        </authorList>
    </citation>
    <scope>FUNCTION OF THE CTDK-I COMPLEX</scope>
</reference>
<reference key="13">
    <citation type="journal article" date="2004" name="Nucleic Acids Res.">
        <title>CTD kinase I is involved in RNA polymerase I transcription.</title>
        <authorList>
            <person name="Bouchoux C."/>
            <person name="Hautbergue G."/>
            <person name="Grenetier S."/>
            <person name="Carles C."/>
            <person name="Riva M."/>
            <person name="Goguel V."/>
        </authorList>
    </citation>
    <scope>FUNCTION IN RNA POLYMERASE I TRANSCRIPTION</scope>
    <scope>SUBCELLULAR LOCATION</scope>
</reference>
<reference key="14">
    <citation type="journal article" date="2005" name="FEBS Lett.">
        <title>Glucose deprivation mediates interaction between CTDK-I and Snf1 in Saccharomyces cerevisiae.</title>
        <authorList>
            <person name="Van Driessche B."/>
            <person name="Coddens S."/>
            <person name="Van Mullem V."/>
            <person name="Vandenhaute J."/>
        </authorList>
    </citation>
    <scope>FUNCTION IN ADAPTATION TO ALTERNATIVE CARBON SOURCES</scope>
</reference>
<reference key="15">
    <citation type="journal article" date="2006" name="Nucleic Acids Res.">
        <title>CTD kinase I is required for the integrity of the rDNA tandem array.</title>
        <authorList>
            <person name="Grenetier S."/>
            <person name="Bouchoux C."/>
            <person name="Goguel V."/>
        </authorList>
    </citation>
    <scope>FUNCTION IN THE INTEGRITY OF RDNA</scope>
</reference>
<reference key="16">
    <citation type="journal article" date="2008" name="Mol. Cell. Proteomics">
        <title>A multidimensional chromatography technology for in-depth phosphoproteome analysis.</title>
        <authorList>
            <person name="Albuquerque C.P."/>
            <person name="Smolka M.B."/>
            <person name="Payne S.H."/>
            <person name="Bafna V."/>
            <person name="Eng J."/>
            <person name="Zhou H."/>
        </authorList>
    </citation>
    <scope>IDENTIFICATION BY MASS SPECTROMETRY [LARGE SCALE ANALYSIS]</scope>
</reference>
<reference key="17">
    <citation type="journal article" date="2009" name="Science">
        <title>Global analysis of Cdk1 substrate phosphorylation sites provides insights into evolution.</title>
        <authorList>
            <person name="Holt L.J."/>
            <person name="Tuch B.B."/>
            <person name="Villen J."/>
            <person name="Johnson A.D."/>
            <person name="Gygi S.P."/>
            <person name="Morgan D.O."/>
        </authorList>
    </citation>
    <scope>PHOSPHORYLATION [LARGE SCALE ANALYSIS] AT THR-35</scope>
    <scope>IDENTIFICATION BY MASS SPECTROMETRY [LARGE SCALE ANALYSIS]</scope>
</reference>
<feature type="chain" id="PRO_0000079495" description="CTD kinase subunit gamma">
    <location>
        <begin position="1"/>
        <end position="296"/>
    </location>
</feature>
<feature type="region of interest" description="Disordered" evidence="1">
    <location>
        <begin position="25"/>
        <end position="44"/>
    </location>
</feature>
<feature type="compositionally biased region" description="Low complexity" evidence="1">
    <location>
        <begin position="29"/>
        <end position="39"/>
    </location>
</feature>
<feature type="modified residue" description="Phosphothreonine" evidence="13">
    <location>
        <position position="35"/>
    </location>
</feature>
<feature type="mutagenesis site" description="No interaction with CTK2. Still interacts with CTK1.">
    <location>
        <begin position="274"/>
        <end position="296"/>
    </location>
</feature>
<feature type="sequence conflict" description="In Ref. 1; AAC49078." evidence="12" ref="1">
    <original>N</original>
    <variation>T</variation>
    <location>
        <position position="101"/>
    </location>
</feature>
<feature type="sequence conflict" description="In Ref. 5; CAE82078." evidence="12" ref="5">
    <original>M</original>
    <variation>MLM</variation>
    <location>
        <position position="112"/>
    </location>
</feature>
<feature type="sequence conflict" description="In Ref. 5; CAE82078." evidence="12" ref="5">
    <original>L</original>
    <variation>V</variation>
    <location>
        <position position="163"/>
    </location>
</feature>
<feature type="sequence conflict" description="In Ref. 5; CAE82078." evidence="12" ref="5">
    <original>T</original>
    <variation>I</variation>
    <location>
        <position position="174"/>
    </location>
</feature>
<feature type="sequence conflict" description="In Ref. 1; AAC49078." evidence="12" ref="1">
    <original>I</original>
    <variation>M</variation>
    <location>
        <position position="295"/>
    </location>
</feature>
<feature type="helix" evidence="14">
    <location>
        <begin position="6"/>
        <end position="15"/>
    </location>
</feature>
<feature type="helix" evidence="14">
    <location>
        <begin position="17"/>
        <end position="20"/>
    </location>
</feature>
<feature type="helix" evidence="14">
    <location>
        <begin position="48"/>
        <end position="72"/>
    </location>
</feature>
<feature type="helix" evidence="14">
    <location>
        <begin position="75"/>
        <end position="92"/>
    </location>
</feature>
<feature type="helix" evidence="14">
    <location>
        <begin position="104"/>
        <end position="108"/>
    </location>
</feature>
<feature type="turn" evidence="14">
    <location>
        <begin position="109"/>
        <end position="113"/>
    </location>
</feature>
<feature type="helix" evidence="14">
    <location>
        <begin position="114"/>
        <end position="121"/>
    </location>
</feature>
<feature type="helix" evidence="14">
    <location>
        <begin position="128"/>
        <end position="132"/>
    </location>
</feature>
<feature type="helix" evidence="14">
    <location>
        <begin position="133"/>
        <end position="146"/>
    </location>
</feature>
<feature type="helix" evidence="14">
    <location>
        <begin position="152"/>
        <end position="155"/>
    </location>
</feature>
<feature type="helix" evidence="14">
    <location>
        <begin position="181"/>
        <end position="206"/>
    </location>
</feature>
<feature type="helix" evidence="14">
    <location>
        <begin position="224"/>
        <end position="243"/>
    </location>
</feature>
<feature type="turn" evidence="14">
    <location>
        <begin position="244"/>
        <end position="246"/>
    </location>
</feature>
<feature type="helix" evidence="14">
    <location>
        <begin position="258"/>
        <end position="270"/>
    </location>
</feature>
<feature type="helix" evidence="14">
    <location>
        <begin position="277"/>
        <end position="294"/>
    </location>
</feature>
<keyword id="KW-0002">3D-structure</keyword>
<keyword id="KW-0963">Cytoplasm</keyword>
<keyword id="KW-0903">Direct protein sequencing</keyword>
<keyword id="KW-0227">DNA damage</keyword>
<keyword id="KW-0507">mRNA processing</keyword>
<keyword id="KW-0539">Nucleus</keyword>
<keyword id="KW-0597">Phosphoprotein</keyword>
<keyword id="KW-1185">Reference proteome</keyword>
<keyword id="KW-0804">Transcription</keyword>
<keyword id="KW-0832">Ubl conjugation</keyword>